<gene>
    <name type="primary">insH10</name>
    <name type="ordered locus">b3218</name>
    <name type="ordered locus">JW3185</name>
</gene>
<reference key="1">
    <citation type="journal article" date="1994" name="Nucleic Acids Res.">
        <title>Analysis of the Escherichia coli genome. V. DNA sequence of the region from 76.0 to 81.5 minutes.</title>
        <authorList>
            <person name="Sofia H.J."/>
            <person name="Burland V."/>
            <person name="Daniels D.L."/>
            <person name="Plunkett G. III"/>
            <person name="Blattner F.R."/>
        </authorList>
    </citation>
    <scope>NUCLEOTIDE SEQUENCE [LARGE SCALE GENOMIC DNA]</scope>
    <source>
        <strain>K12 / MG1655 / ATCC 47076</strain>
    </source>
</reference>
<reference key="2">
    <citation type="journal article" date="1996" name="DNA Res.">
        <title>A 570-kb DNA sequence of the Escherichia coli K-12 genome corresponding to the 28.0-40.1 min region on the linkage map.</title>
        <authorList>
            <person name="Aiba H."/>
            <person name="Baba T."/>
            <person name="Fujita K."/>
            <person name="Hayashi K."/>
            <person name="Inada T."/>
            <person name="Isono K."/>
            <person name="Itoh T."/>
            <person name="Kasai H."/>
            <person name="Kashimoto K."/>
            <person name="Kimura S."/>
            <person name="Kitakawa M."/>
            <person name="Kitagawa M."/>
            <person name="Makino K."/>
            <person name="Miki T."/>
            <person name="Mizobuchi K."/>
            <person name="Mori H."/>
            <person name="Mori T."/>
            <person name="Motomura K."/>
            <person name="Nakade S."/>
            <person name="Nakamura Y."/>
            <person name="Nashimoto H."/>
            <person name="Nishio Y."/>
            <person name="Oshima T."/>
            <person name="Saito N."/>
            <person name="Sampei G."/>
            <person name="Seki Y."/>
            <person name="Sivasundaram S."/>
            <person name="Tagami H."/>
            <person name="Takeda J."/>
            <person name="Takemoto K."/>
            <person name="Takeuchi Y."/>
            <person name="Wada C."/>
            <person name="Yamamoto Y."/>
            <person name="Horiuchi T."/>
        </authorList>
    </citation>
    <scope>NUCLEOTIDE SEQUENCE [LARGE SCALE GENOMIC DNA]</scope>
    <source>
        <strain>K12 / W3110 / ATCC 27325 / DSM 5911</strain>
    </source>
</reference>
<reference key="3">
    <citation type="journal article" date="1996" name="DNA Res.">
        <title>A 460-kb DNA sequence of the Escherichia coli K-12 genome corresponding to the 40.1-50.0 min region on the linkage map.</title>
        <authorList>
            <person name="Itoh T."/>
            <person name="Aiba H."/>
            <person name="Baba T."/>
            <person name="Fujita K."/>
            <person name="Hayashi K."/>
            <person name="Inada T."/>
            <person name="Isono K."/>
            <person name="Kasai H."/>
            <person name="Kimura S."/>
            <person name="Kitakawa M."/>
            <person name="Kitagawa M."/>
            <person name="Makino K."/>
            <person name="Miki T."/>
            <person name="Mizobuchi K."/>
            <person name="Mori H."/>
            <person name="Mori T."/>
            <person name="Motomura K."/>
            <person name="Nakade S."/>
            <person name="Nakamura Y."/>
            <person name="Nashimoto H."/>
            <person name="Nishio Y."/>
            <person name="Oshima T."/>
            <person name="Saito N."/>
            <person name="Sampei G."/>
            <person name="Seki Y."/>
            <person name="Sivasundaram S."/>
            <person name="Tagami H."/>
            <person name="Takeda J."/>
            <person name="Takemoto K."/>
            <person name="Wada C."/>
            <person name="Yamamoto Y."/>
            <person name="Horiuchi T."/>
        </authorList>
    </citation>
    <scope>NUCLEOTIDE SEQUENCE [LARGE SCALE GENOMIC DNA]</scope>
    <source>
        <strain>K12 / W3110 / ATCC 27325 / DSM 5911</strain>
    </source>
</reference>
<reference key="4">
    <citation type="submission" date="1997-01" db="EMBL/GenBank/DDBJ databases">
        <title>Sequence of minutes 4-25 of Escherichia coli.</title>
        <authorList>
            <person name="Chung E."/>
            <person name="Allen E."/>
            <person name="Araujo R."/>
            <person name="Aparicio A.M."/>
            <person name="Davis K."/>
            <person name="Duncan M."/>
            <person name="Federspiel N."/>
            <person name="Hyman R."/>
            <person name="Kalman S."/>
            <person name="Komp C."/>
            <person name="Kurdi O."/>
            <person name="Lew H."/>
            <person name="Lin D."/>
            <person name="Namath A."/>
            <person name="Oefner P."/>
            <person name="Roberts D."/>
            <person name="Schramm S."/>
            <person name="Davis R.W."/>
        </authorList>
    </citation>
    <scope>NUCLEOTIDE SEQUENCE [LARGE SCALE GENOMIC DNA]</scope>
    <source>
        <strain>K12 / MG1655 / ATCC 47076</strain>
    </source>
</reference>
<reference key="5">
    <citation type="journal article" date="1997" name="Science">
        <title>The complete genome sequence of Escherichia coli K-12.</title>
        <authorList>
            <person name="Blattner F.R."/>
            <person name="Plunkett G. III"/>
            <person name="Bloch C.A."/>
            <person name="Perna N.T."/>
            <person name="Burland V."/>
            <person name="Riley M."/>
            <person name="Collado-Vides J."/>
            <person name="Glasner J.D."/>
            <person name="Rode C.K."/>
            <person name="Mayhew G.F."/>
            <person name="Gregor J."/>
            <person name="Davis N.W."/>
            <person name="Kirkpatrick H.A."/>
            <person name="Goeden M.A."/>
            <person name="Rose D.J."/>
            <person name="Mau B."/>
            <person name="Shao Y."/>
        </authorList>
    </citation>
    <scope>NUCLEOTIDE SEQUENCE [LARGE SCALE GENOMIC DNA]</scope>
    <source>
        <strain>K12 / MG1655 / ATCC 47076</strain>
    </source>
</reference>
<reference key="6">
    <citation type="journal article" date="2006" name="Mol. Syst. Biol.">
        <title>Highly accurate genome sequences of Escherichia coli K-12 strains MG1655 and W3110.</title>
        <authorList>
            <person name="Hayashi K."/>
            <person name="Morooka N."/>
            <person name="Yamamoto Y."/>
            <person name="Fujita K."/>
            <person name="Isono K."/>
            <person name="Choi S."/>
            <person name="Ohtsubo E."/>
            <person name="Baba T."/>
            <person name="Wanner B.L."/>
            <person name="Mori H."/>
            <person name="Horiuchi T."/>
        </authorList>
    </citation>
    <scope>NUCLEOTIDE SEQUENCE [LARGE SCALE GENOMIC DNA]</scope>
    <source>
        <strain>K12 / W3110 / ATCC 27325 / DSM 5911</strain>
    </source>
</reference>
<keyword id="KW-0233">DNA recombination</keyword>
<keyword id="KW-0238">DNA-binding</keyword>
<keyword id="KW-1185">Reference proteome</keyword>
<keyword id="KW-0814">Transposable element</keyword>
<keyword id="KW-0815">Transposition</keyword>
<comment type="function">
    <text>Involved in the transposition of the insertion sequence IS5.</text>
</comment>
<comment type="similarity">
    <text evidence="1">Belongs to the transposase 11 family.</text>
</comment>
<comment type="sequence caution" evidence="1">
    <conflict type="erroneous initiation">
        <sequence resource="EMBL-CDS" id="AAA58020"/>
    </conflict>
    <text>Extended N-terminus.</text>
</comment>
<comment type="sequence caution" evidence="1">
    <conflict type="erroneous initiation">
        <sequence resource="EMBL-CDS" id="BAE77261"/>
    </conflict>
    <text>Extended N-terminus.</text>
</comment>
<accession>P0CE57</accession>
<accession>O07987</accession>
<accession>O07988</accession>
<accession>P03837</accession>
<accession>P76355</accession>
<accession>Q2MBK1</accession>
<accession>Q2MBM8</accession>
<organism>
    <name type="scientific">Escherichia coli (strain K12)</name>
    <dbReference type="NCBI Taxonomy" id="83333"/>
    <lineage>
        <taxon>Bacteria</taxon>
        <taxon>Pseudomonadati</taxon>
        <taxon>Pseudomonadota</taxon>
        <taxon>Gammaproteobacteria</taxon>
        <taxon>Enterobacterales</taxon>
        <taxon>Enterobacteriaceae</taxon>
        <taxon>Escherichia</taxon>
    </lineage>
</organism>
<evidence type="ECO:0000305" key="1"/>
<dbReference type="EMBL" id="U18997">
    <property type="protein sequence ID" value="AAA58020.1"/>
    <property type="status" value="ALT_INIT"/>
    <property type="molecule type" value="Genomic_DNA"/>
</dbReference>
<dbReference type="EMBL" id="U00096">
    <property type="protein sequence ID" value="AAC76250.2"/>
    <property type="molecule type" value="Genomic_DNA"/>
</dbReference>
<dbReference type="EMBL" id="AP009048">
    <property type="protein sequence ID" value="BAE77261.1"/>
    <property type="status" value="ALT_INIT"/>
    <property type="molecule type" value="Genomic_DNA"/>
</dbReference>
<dbReference type="RefSeq" id="NP_414793.1">
    <property type="nucleotide sequence ID" value="NC_000913.3"/>
</dbReference>
<dbReference type="RefSeq" id="NP_415084.1">
    <property type="nucleotide sequence ID" value="NC_000913.3"/>
</dbReference>
<dbReference type="RefSeq" id="NP_415189.1">
    <property type="nucleotide sequence ID" value="NC_000913.3"/>
</dbReference>
<dbReference type="RefSeq" id="NP_415847.1">
    <property type="nucleotide sequence ID" value="NC_000913.3"/>
</dbReference>
<dbReference type="RefSeq" id="NP_416535.1">
    <property type="nucleotide sequence ID" value="NC_000913.3"/>
</dbReference>
<dbReference type="RefSeq" id="NP_416696.1">
    <property type="nucleotide sequence ID" value="NC_000913.3"/>
</dbReference>
<dbReference type="RefSeq" id="NP_417456.1">
    <property type="nucleotide sequence ID" value="NC_000913.3"/>
</dbReference>
<dbReference type="RefSeq" id="NP_417685.1">
    <property type="nucleotide sequence ID" value="NC_000913.3"/>
</dbReference>
<dbReference type="RefSeq" id="NP_417962.1">
    <property type="nucleotide sequence ID" value="NC_000913.3"/>
</dbReference>
<dbReference type="RefSeq" id="WP_000019403.1">
    <property type="nucleotide sequence ID" value="NZ_SSZK01000120.1"/>
</dbReference>
<dbReference type="FunCoup" id="P0CE57">
    <property type="interactions" value="11"/>
</dbReference>
<dbReference type="STRING" id="511145.b0259"/>
<dbReference type="jPOST" id="P0CE57"/>
<dbReference type="PaxDb" id="511145-b0259"/>
<dbReference type="EnsemblBacteria" id="AAC76250">
    <property type="protein sequence ID" value="AAC76250"/>
    <property type="gene ID" value="b3218"/>
</dbReference>
<dbReference type="GeneID" id="947743"/>
<dbReference type="KEGG" id="ecj:JW3185"/>
<dbReference type="KEGG" id="eco:b0259"/>
<dbReference type="KEGG" id="eco:b0552"/>
<dbReference type="KEGG" id="eco:b0656"/>
<dbReference type="KEGG" id="eco:b2030"/>
<dbReference type="KEGG" id="eco:b2192"/>
<dbReference type="KEGG" id="eco:b2982"/>
<dbReference type="KEGG" id="eco:b3218"/>
<dbReference type="KEGG" id="eco:b3505"/>
<dbReference type="KEGG" id="eco:b4711"/>
<dbReference type="KEGG" id="ecoc:C3026_01250"/>
<dbReference type="KEGG" id="ecoc:C3026_02730"/>
<dbReference type="KEGG" id="ecoc:C3026_03280"/>
<dbReference type="KEGG" id="ecoc:C3026_07795"/>
<dbReference type="KEGG" id="ecoc:C3026_10760"/>
<dbReference type="KEGG" id="ecoc:C3026_11440"/>
<dbReference type="KEGG" id="ecoc:C3026_12250"/>
<dbReference type="KEGG" id="ecoc:C3026_16315"/>
<dbReference type="KEGG" id="ecoc:C3026_17505"/>
<dbReference type="KEGG" id="ecoc:C3026_18985"/>
<dbReference type="KEGG" id="ecoc:C3026_23975"/>
<dbReference type="eggNOG" id="COG3039">
    <property type="taxonomic scope" value="Bacteria"/>
</dbReference>
<dbReference type="HOGENOM" id="CLU_049873_1_2_6"/>
<dbReference type="InParanoid" id="P0CE57"/>
<dbReference type="PhylomeDB" id="P0CE57"/>
<dbReference type="BioCyc" id="EcoCyc:MONOMER0-4240"/>
<dbReference type="PRO" id="PR:P0CE57"/>
<dbReference type="Proteomes" id="UP000000625">
    <property type="component" value="Chromosome"/>
</dbReference>
<dbReference type="GO" id="GO:0005829">
    <property type="term" value="C:cytosol"/>
    <property type="evidence" value="ECO:0000318"/>
    <property type="project" value="GO_Central"/>
</dbReference>
<dbReference type="GO" id="GO:0003677">
    <property type="term" value="F:DNA binding"/>
    <property type="evidence" value="ECO:0007669"/>
    <property type="project" value="UniProtKB-KW"/>
</dbReference>
<dbReference type="GO" id="GO:0004803">
    <property type="term" value="F:transposase activity"/>
    <property type="evidence" value="ECO:0000318"/>
    <property type="project" value="GO_Central"/>
</dbReference>
<dbReference type="GO" id="GO:0006313">
    <property type="term" value="P:DNA transposition"/>
    <property type="evidence" value="ECO:0000318"/>
    <property type="project" value="GO_Central"/>
</dbReference>
<dbReference type="InterPro" id="IPR047959">
    <property type="entry name" value="Transpos_IS5"/>
</dbReference>
<dbReference type="InterPro" id="IPR002559">
    <property type="entry name" value="Transposase_11"/>
</dbReference>
<dbReference type="InterPro" id="IPR008490">
    <property type="entry name" value="Transposase_InsH_N"/>
</dbReference>
<dbReference type="NCBIfam" id="NF033581">
    <property type="entry name" value="transpos_IS5_4"/>
    <property type="match status" value="1"/>
</dbReference>
<dbReference type="PANTHER" id="PTHR35604">
    <property type="entry name" value="TRANSPOSASE INSH FOR INSERTION SEQUENCE ELEMENT IS5A-RELATED"/>
    <property type="match status" value="1"/>
</dbReference>
<dbReference type="PANTHER" id="PTHR35604:SF2">
    <property type="entry name" value="TRANSPOSASE INSH FOR INSERTION SEQUENCE ELEMENT IS5A-RELATED"/>
    <property type="match status" value="1"/>
</dbReference>
<dbReference type="Pfam" id="PF01609">
    <property type="entry name" value="DDE_Tnp_1"/>
    <property type="match status" value="1"/>
</dbReference>
<dbReference type="Pfam" id="PF05598">
    <property type="entry name" value="DUF772"/>
    <property type="match status" value="1"/>
</dbReference>
<proteinExistence type="inferred from homology"/>
<protein>
    <recommendedName>
        <fullName>Transposase InsH for insertion sequence element IS5R</fullName>
    </recommendedName>
</protein>
<name>INH10_ECOLI</name>
<sequence>MSHQLTFADSEFSSKRRQTRKEIFLSRMEQILPWQNMVEVIEPFYPKAGNGRRPYPLETMLRIHCMQHWYNLSDGAMEDALYEIASMRLFARLSLDSALPDRTTIMNFRHLLEQHQLARQLFKTINRWLAEAGVMMTQGTLVDATIIEAPSSTKNKEQQRDPEMHQTKKGNQWHFGMKAHIGVDAKSGLTHSLVTTAANEHDLNQLGNLLHGEEQFVSADAGYQGAPQREELAEVDVDWLIAERPGKVRTLKQHPRKNKTAINIEYMKASIRARVEHPFRIIKRQFGFVKARYKGLLKNDNQLAMLFTLANLFRADQMIRQWERSH</sequence>
<feature type="chain" id="PRO_0000392488" description="Transposase InsH for insertion sequence element IS5R">
    <location>
        <begin position="1"/>
        <end position="326"/>
    </location>
</feature>